<accession>B6IUZ1</accession>
<sequence>MDLPEIQADWLTPPDLATAARVQRDLAGRVVPHGPDGPVRTVAGVDVSQFGRDPSGRVFAAVVLLDAATREVLEVGTAMRVAPIPYVPGFLGFREVPALLAAFGALSRRPDLVLVDGHGTSHPRGLGIAAHLGVLLDIPAIGVAKSILVGAPAGELGGTRGSRVPLVWQGRTIATVLRSKDRVAPLYVSTGHRIDEEAAVDWTLRLGGRYRLPEPTRRAHEAANAFRRAWGTGAAEGSGV</sequence>
<gene>
    <name evidence="1" type="primary">nfi</name>
    <name type="ordered locus">RC1_2698</name>
</gene>
<proteinExistence type="inferred from homology"/>
<evidence type="ECO:0000255" key="1">
    <source>
        <dbReference type="HAMAP-Rule" id="MF_00801"/>
    </source>
</evidence>
<keyword id="KW-0963">Cytoplasm</keyword>
<keyword id="KW-0227">DNA damage</keyword>
<keyword id="KW-0234">DNA repair</keyword>
<keyword id="KW-0255">Endonuclease</keyword>
<keyword id="KW-0378">Hydrolase</keyword>
<keyword id="KW-0460">Magnesium</keyword>
<keyword id="KW-0479">Metal-binding</keyword>
<keyword id="KW-0540">Nuclease</keyword>
<keyword id="KW-1185">Reference proteome</keyword>
<reference key="1">
    <citation type="submission" date="2007-03" db="EMBL/GenBank/DDBJ databases">
        <title>Genome sequence of Rhodospirillum centenum.</title>
        <authorList>
            <person name="Touchman J.W."/>
            <person name="Bauer C."/>
            <person name="Blankenship R.E."/>
        </authorList>
    </citation>
    <scope>NUCLEOTIDE SEQUENCE [LARGE SCALE GENOMIC DNA]</scope>
    <source>
        <strain>ATCC 51521 / SW</strain>
    </source>
</reference>
<comment type="function">
    <text evidence="1">DNA repair enzyme involved in the repair of deaminated bases. Selectively cleaves double-stranded DNA at the second phosphodiester bond 3' to a deoxyinosine leaving behind the intact lesion on the nicked DNA.</text>
</comment>
<comment type="catalytic activity">
    <reaction evidence="1">
        <text>Endonucleolytic cleavage at apurinic or apyrimidinic sites to products with a 5'-phosphate.</text>
        <dbReference type="EC" id="3.1.21.7"/>
    </reaction>
</comment>
<comment type="cofactor">
    <cofactor evidence="1">
        <name>Mg(2+)</name>
        <dbReference type="ChEBI" id="CHEBI:18420"/>
    </cofactor>
</comment>
<comment type="subcellular location">
    <subcellularLocation>
        <location evidence="1">Cytoplasm</location>
    </subcellularLocation>
</comment>
<comment type="similarity">
    <text evidence="1">Belongs to the endonuclease V family.</text>
</comment>
<feature type="chain" id="PRO_1000148536" description="Endonuclease V">
    <location>
        <begin position="1"/>
        <end position="240"/>
    </location>
</feature>
<feature type="binding site" evidence="1">
    <location>
        <position position="46"/>
    </location>
    <ligand>
        <name>Mg(2+)</name>
        <dbReference type="ChEBI" id="CHEBI:18420"/>
    </ligand>
</feature>
<feature type="binding site" evidence="1">
    <location>
        <position position="116"/>
    </location>
    <ligand>
        <name>Mg(2+)</name>
        <dbReference type="ChEBI" id="CHEBI:18420"/>
    </ligand>
</feature>
<feature type="site" description="Interaction with target DNA" evidence="1">
    <location>
        <position position="86"/>
    </location>
</feature>
<organism>
    <name type="scientific">Rhodospirillum centenum (strain ATCC 51521 / SW)</name>
    <dbReference type="NCBI Taxonomy" id="414684"/>
    <lineage>
        <taxon>Bacteria</taxon>
        <taxon>Pseudomonadati</taxon>
        <taxon>Pseudomonadota</taxon>
        <taxon>Alphaproteobacteria</taxon>
        <taxon>Rhodospirillales</taxon>
        <taxon>Rhodospirillaceae</taxon>
        <taxon>Rhodospirillum</taxon>
    </lineage>
</organism>
<protein>
    <recommendedName>
        <fullName evidence="1">Endonuclease V</fullName>
        <ecNumber evidence="1">3.1.21.7</ecNumber>
    </recommendedName>
    <alternativeName>
        <fullName evidence="1">Deoxyinosine 3'endonuclease</fullName>
    </alternativeName>
    <alternativeName>
        <fullName evidence="1">Deoxyribonuclease V</fullName>
        <shortName evidence="1">DNase V</shortName>
    </alternativeName>
</protein>
<dbReference type="EC" id="3.1.21.7" evidence="1"/>
<dbReference type="EMBL" id="CP000613">
    <property type="protein sequence ID" value="ACJ00073.1"/>
    <property type="molecule type" value="Genomic_DNA"/>
</dbReference>
<dbReference type="RefSeq" id="WP_012567854.1">
    <property type="nucleotide sequence ID" value="NC_011420.2"/>
</dbReference>
<dbReference type="SMR" id="B6IUZ1"/>
<dbReference type="STRING" id="414684.RC1_2698"/>
<dbReference type="KEGG" id="rce:RC1_2698"/>
<dbReference type="eggNOG" id="COG1515">
    <property type="taxonomic scope" value="Bacteria"/>
</dbReference>
<dbReference type="HOGENOM" id="CLU_047631_1_1_5"/>
<dbReference type="OrthoDB" id="9790916at2"/>
<dbReference type="Proteomes" id="UP000001591">
    <property type="component" value="Chromosome"/>
</dbReference>
<dbReference type="GO" id="GO:0005737">
    <property type="term" value="C:cytoplasm"/>
    <property type="evidence" value="ECO:0007669"/>
    <property type="project" value="UniProtKB-SubCell"/>
</dbReference>
<dbReference type="GO" id="GO:0043737">
    <property type="term" value="F:deoxyribonuclease V activity"/>
    <property type="evidence" value="ECO:0007669"/>
    <property type="project" value="UniProtKB-UniRule"/>
</dbReference>
<dbReference type="GO" id="GO:0000287">
    <property type="term" value="F:magnesium ion binding"/>
    <property type="evidence" value="ECO:0007669"/>
    <property type="project" value="UniProtKB-UniRule"/>
</dbReference>
<dbReference type="GO" id="GO:0016891">
    <property type="term" value="F:RNA endonuclease activity, producing 5'-phosphomonoesters"/>
    <property type="evidence" value="ECO:0007669"/>
    <property type="project" value="TreeGrafter"/>
</dbReference>
<dbReference type="GO" id="GO:0003727">
    <property type="term" value="F:single-stranded RNA binding"/>
    <property type="evidence" value="ECO:0007669"/>
    <property type="project" value="TreeGrafter"/>
</dbReference>
<dbReference type="GO" id="GO:0006281">
    <property type="term" value="P:DNA repair"/>
    <property type="evidence" value="ECO:0007669"/>
    <property type="project" value="UniProtKB-UniRule"/>
</dbReference>
<dbReference type="CDD" id="cd06559">
    <property type="entry name" value="Endonuclease_V"/>
    <property type="match status" value="1"/>
</dbReference>
<dbReference type="Gene3D" id="3.30.2170.10">
    <property type="entry name" value="archaeoglobus fulgidus dsm 4304 superfamily"/>
    <property type="match status" value="1"/>
</dbReference>
<dbReference type="HAMAP" id="MF_00801">
    <property type="entry name" value="Endonuclease_5"/>
    <property type="match status" value="1"/>
</dbReference>
<dbReference type="InterPro" id="IPR007581">
    <property type="entry name" value="Endonuclease-V"/>
</dbReference>
<dbReference type="PANTHER" id="PTHR28511">
    <property type="entry name" value="ENDONUCLEASE V"/>
    <property type="match status" value="1"/>
</dbReference>
<dbReference type="PANTHER" id="PTHR28511:SF1">
    <property type="entry name" value="ENDONUCLEASE V"/>
    <property type="match status" value="1"/>
</dbReference>
<dbReference type="Pfam" id="PF04493">
    <property type="entry name" value="Endonuclease_5"/>
    <property type="match status" value="1"/>
</dbReference>
<name>NFI_RHOCS</name>